<protein>
    <recommendedName>
        <fullName evidence="1">Small ribosomal subunit protein uS14</fullName>
    </recommendedName>
    <alternativeName>
        <fullName evidence="2">30S ribosomal protein S14</fullName>
    </alternativeName>
</protein>
<dbReference type="EMBL" id="CP000083">
    <property type="protein sequence ID" value="AAZ27560.1"/>
    <property type="molecule type" value="Genomic_DNA"/>
</dbReference>
<dbReference type="RefSeq" id="WP_011041464.1">
    <property type="nucleotide sequence ID" value="NC_003910.7"/>
</dbReference>
<dbReference type="SMR" id="Q489A0"/>
<dbReference type="STRING" id="167879.CPS_0614"/>
<dbReference type="KEGG" id="cps:CPS_0614"/>
<dbReference type="eggNOG" id="COG0199">
    <property type="taxonomic scope" value="Bacteria"/>
</dbReference>
<dbReference type="HOGENOM" id="CLU_139869_0_1_6"/>
<dbReference type="Proteomes" id="UP000000547">
    <property type="component" value="Chromosome"/>
</dbReference>
<dbReference type="GO" id="GO:0005737">
    <property type="term" value="C:cytoplasm"/>
    <property type="evidence" value="ECO:0007669"/>
    <property type="project" value="UniProtKB-ARBA"/>
</dbReference>
<dbReference type="GO" id="GO:0015935">
    <property type="term" value="C:small ribosomal subunit"/>
    <property type="evidence" value="ECO:0007669"/>
    <property type="project" value="TreeGrafter"/>
</dbReference>
<dbReference type="GO" id="GO:0019843">
    <property type="term" value="F:rRNA binding"/>
    <property type="evidence" value="ECO:0007669"/>
    <property type="project" value="UniProtKB-UniRule"/>
</dbReference>
<dbReference type="GO" id="GO:0003735">
    <property type="term" value="F:structural constituent of ribosome"/>
    <property type="evidence" value="ECO:0007669"/>
    <property type="project" value="InterPro"/>
</dbReference>
<dbReference type="GO" id="GO:0006412">
    <property type="term" value="P:translation"/>
    <property type="evidence" value="ECO:0007669"/>
    <property type="project" value="UniProtKB-UniRule"/>
</dbReference>
<dbReference type="FunFam" id="1.10.287.1480:FF:000001">
    <property type="entry name" value="30S ribosomal protein S14"/>
    <property type="match status" value="1"/>
</dbReference>
<dbReference type="Gene3D" id="1.10.287.1480">
    <property type="match status" value="1"/>
</dbReference>
<dbReference type="HAMAP" id="MF_00537">
    <property type="entry name" value="Ribosomal_uS14_1"/>
    <property type="match status" value="1"/>
</dbReference>
<dbReference type="InterPro" id="IPR001209">
    <property type="entry name" value="Ribosomal_uS14"/>
</dbReference>
<dbReference type="InterPro" id="IPR023036">
    <property type="entry name" value="Ribosomal_uS14_bac/plastid"/>
</dbReference>
<dbReference type="InterPro" id="IPR018271">
    <property type="entry name" value="Ribosomal_uS14_CS"/>
</dbReference>
<dbReference type="NCBIfam" id="NF006477">
    <property type="entry name" value="PRK08881.1"/>
    <property type="match status" value="1"/>
</dbReference>
<dbReference type="PANTHER" id="PTHR19836">
    <property type="entry name" value="30S RIBOSOMAL PROTEIN S14"/>
    <property type="match status" value="1"/>
</dbReference>
<dbReference type="PANTHER" id="PTHR19836:SF19">
    <property type="entry name" value="SMALL RIBOSOMAL SUBUNIT PROTEIN US14M"/>
    <property type="match status" value="1"/>
</dbReference>
<dbReference type="Pfam" id="PF00253">
    <property type="entry name" value="Ribosomal_S14"/>
    <property type="match status" value="1"/>
</dbReference>
<dbReference type="SUPFAM" id="SSF57716">
    <property type="entry name" value="Glucocorticoid receptor-like (DNA-binding domain)"/>
    <property type="match status" value="1"/>
</dbReference>
<dbReference type="PROSITE" id="PS00527">
    <property type="entry name" value="RIBOSOMAL_S14"/>
    <property type="match status" value="1"/>
</dbReference>
<gene>
    <name evidence="1" type="primary">rpsN</name>
    <name type="ordered locus">CPS_0614</name>
</gene>
<reference key="1">
    <citation type="journal article" date="2005" name="Proc. Natl. Acad. Sci. U.S.A.">
        <title>The psychrophilic lifestyle as revealed by the genome sequence of Colwellia psychrerythraea 34H through genomic and proteomic analyses.</title>
        <authorList>
            <person name="Methe B.A."/>
            <person name="Nelson K.E."/>
            <person name="Deming J.W."/>
            <person name="Momen B."/>
            <person name="Melamud E."/>
            <person name="Zhang X."/>
            <person name="Moult J."/>
            <person name="Madupu R."/>
            <person name="Nelson W.C."/>
            <person name="Dodson R.J."/>
            <person name="Brinkac L.M."/>
            <person name="Daugherty S.C."/>
            <person name="Durkin A.S."/>
            <person name="DeBoy R.T."/>
            <person name="Kolonay J.F."/>
            <person name="Sullivan S.A."/>
            <person name="Zhou L."/>
            <person name="Davidsen T.M."/>
            <person name="Wu M."/>
            <person name="Huston A.L."/>
            <person name="Lewis M."/>
            <person name="Weaver B."/>
            <person name="Weidman J.F."/>
            <person name="Khouri H."/>
            <person name="Utterback T.R."/>
            <person name="Feldblyum T.V."/>
            <person name="Fraser C.M."/>
        </authorList>
    </citation>
    <scope>NUCLEOTIDE SEQUENCE [LARGE SCALE GENOMIC DNA]</scope>
    <source>
        <strain>34H / ATCC BAA-681</strain>
    </source>
</reference>
<sequence length="101" mass="11477">MAKTSMKAREAKRTKLVAQYAEKRAALKAIISGTDSSDEERWDAVLKLQSLPRDSSSSRQRNRCNITGRPHGFLRKFGLSRIKLRETMMRGEVPGLKKASW</sequence>
<proteinExistence type="inferred from homology"/>
<name>RS14_COLP3</name>
<feature type="chain" id="PRO_1000128367" description="Small ribosomal subunit protein uS14">
    <location>
        <begin position="1"/>
        <end position="101"/>
    </location>
</feature>
<comment type="function">
    <text evidence="1">Binds 16S rRNA, required for the assembly of 30S particles and may also be responsible for determining the conformation of the 16S rRNA at the A site.</text>
</comment>
<comment type="subunit">
    <text evidence="1">Part of the 30S ribosomal subunit. Contacts proteins S3 and S10.</text>
</comment>
<comment type="similarity">
    <text evidence="1">Belongs to the universal ribosomal protein uS14 family.</text>
</comment>
<keyword id="KW-0687">Ribonucleoprotein</keyword>
<keyword id="KW-0689">Ribosomal protein</keyword>
<keyword id="KW-0694">RNA-binding</keyword>
<keyword id="KW-0699">rRNA-binding</keyword>
<accession>Q489A0</accession>
<evidence type="ECO:0000255" key="1">
    <source>
        <dbReference type="HAMAP-Rule" id="MF_00537"/>
    </source>
</evidence>
<evidence type="ECO:0000305" key="2"/>
<organism>
    <name type="scientific">Colwellia psychrerythraea (strain 34H / ATCC BAA-681)</name>
    <name type="common">Vibrio psychroerythus</name>
    <dbReference type="NCBI Taxonomy" id="167879"/>
    <lineage>
        <taxon>Bacteria</taxon>
        <taxon>Pseudomonadati</taxon>
        <taxon>Pseudomonadota</taxon>
        <taxon>Gammaproteobacteria</taxon>
        <taxon>Alteromonadales</taxon>
        <taxon>Colwelliaceae</taxon>
        <taxon>Colwellia</taxon>
    </lineage>
</organism>